<accession>Q58377</accession>
<gene>
    <name type="ordered locus">MJ0967</name>
</gene>
<organism>
    <name type="scientific">Methanocaldococcus jannaschii (strain ATCC 43067 / DSM 2661 / JAL-1 / JCM 10045 / NBRC 100440)</name>
    <name type="common">Methanococcus jannaschii</name>
    <dbReference type="NCBI Taxonomy" id="243232"/>
    <lineage>
        <taxon>Archaea</taxon>
        <taxon>Methanobacteriati</taxon>
        <taxon>Methanobacteriota</taxon>
        <taxon>Methanomada group</taxon>
        <taxon>Methanococci</taxon>
        <taxon>Methanococcales</taxon>
        <taxon>Methanocaldococcaceae</taxon>
        <taxon>Methanocaldococcus</taxon>
    </lineage>
</organism>
<reference key="1">
    <citation type="journal article" date="1996" name="Science">
        <title>Complete genome sequence of the methanogenic archaeon, Methanococcus jannaschii.</title>
        <authorList>
            <person name="Bult C.J."/>
            <person name="White O."/>
            <person name="Olsen G.J."/>
            <person name="Zhou L."/>
            <person name="Fleischmann R.D."/>
            <person name="Sutton G.G."/>
            <person name="Blake J.A."/>
            <person name="FitzGerald L.M."/>
            <person name="Clayton R.A."/>
            <person name="Gocayne J.D."/>
            <person name="Kerlavage A.R."/>
            <person name="Dougherty B.A."/>
            <person name="Tomb J.-F."/>
            <person name="Adams M.D."/>
            <person name="Reich C.I."/>
            <person name="Overbeek R."/>
            <person name="Kirkness E.F."/>
            <person name="Weinstock K.G."/>
            <person name="Merrick J.M."/>
            <person name="Glodek A."/>
            <person name="Scott J.L."/>
            <person name="Geoghagen N.S.M."/>
            <person name="Weidman J.F."/>
            <person name="Fuhrmann J.L."/>
            <person name="Nguyen D."/>
            <person name="Utterback T.R."/>
            <person name="Kelley J.M."/>
            <person name="Peterson J.D."/>
            <person name="Sadow P.W."/>
            <person name="Hanna M.C."/>
            <person name="Cotton M.D."/>
            <person name="Roberts K.M."/>
            <person name="Hurst M.A."/>
            <person name="Kaine B.P."/>
            <person name="Borodovsky M."/>
            <person name="Klenk H.-P."/>
            <person name="Fraser C.M."/>
            <person name="Smith H.O."/>
            <person name="Woese C.R."/>
            <person name="Venter J.C."/>
        </authorList>
    </citation>
    <scope>NUCLEOTIDE SEQUENCE [LARGE SCALE GENOMIC DNA]</scope>
    <source>
        <strain>ATCC 43067 / DSM 2661 / JAL-1 / JCM 10045 / NBRC 100440</strain>
    </source>
</reference>
<sequence length="205" mass="22542">MKRLAVILITLALVSSMCITNSNEKRENMKNAKVLMVIAPKDFRDEELFEPMAVFESNGLKVDVVSTTKGECVGMLGNKITVEKTIYDVNPDDYVAIVIVGGIGSKEYLWNNTKLIELVKEFYNKNKVVSAICLSPVVLARAGILKGKKATVYPAPEAIEELKKAGAIYEDRGVVVDGNVITAKSPDYARLFGLEVLKAIEKNNE</sequence>
<protein>
    <recommendedName>
        <fullName>Uncharacterized protein MJ0967</fullName>
    </recommendedName>
</protein>
<feature type="chain" id="PRO_0000157847" description="Uncharacterized protein MJ0967">
    <location>
        <begin position="1"/>
        <end position="205"/>
    </location>
</feature>
<comment type="similarity">
    <text evidence="1">Belongs to the peptidase C56 family.</text>
</comment>
<name>Y967_METJA</name>
<proteinExistence type="inferred from homology"/>
<keyword id="KW-1185">Reference proteome</keyword>
<evidence type="ECO:0000305" key="1"/>
<dbReference type="EMBL" id="L77117">
    <property type="protein sequence ID" value="AAB98972.1"/>
    <property type="molecule type" value="Genomic_DNA"/>
</dbReference>
<dbReference type="PIR" id="G64420">
    <property type="entry name" value="G64420"/>
</dbReference>
<dbReference type="RefSeq" id="WP_010870481.1">
    <property type="nucleotide sequence ID" value="NC_000909.1"/>
</dbReference>
<dbReference type="SMR" id="Q58377"/>
<dbReference type="FunCoup" id="Q58377">
    <property type="interactions" value="93"/>
</dbReference>
<dbReference type="STRING" id="243232.MJ_0967"/>
<dbReference type="PaxDb" id="243232-MJ_0967"/>
<dbReference type="EnsemblBacteria" id="AAB98972">
    <property type="protein sequence ID" value="AAB98972"/>
    <property type="gene ID" value="MJ_0967"/>
</dbReference>
<dbReference type="GeneID" id="1451865"/>
<dbReference type="KEGG" id="mja:MJ_0967"/>
<dbReference type="eggNOG" id="arCOG00769">
    <property type="taxonomic scope" value="Archaea"/>
</dbReference>
<dbReference type="HOGENOM" id="CLU_000445_44_4_2"/>
<dbReference type="InParanoid" id="Q58377"/>
<dbReference type="OrthoDB" id="82036at2157"/>
<dbReference type="PhylomeDB" id="Q58377"/>
<dbReference type="Proteomes" id="UP000000805">
    <property type="component" value="Chromosome"/>
</dbReference>
<dbReference type="GO" id="GO:0005737">
    <property type="term" value="C:cytoplasm"/>
    <property type="evidence" value="ECO:0000318"/>
    <property type="project" value="GO_Central"/>
</dbReference>
<dbReference type="CDD" id="cd03135">
    <property type="entry name" value="GATase1_DJ-1"/>
    <property type="match status" value="1"/>
</dbReference>
<dbReference type="FunFam" id="3.40.50.880:FF:000017">
    <property type="entry name" value="Type 1 glutamine amidotransferase"/>
    <property type="match status" value="1"/>
</dbReference>
<dbReference type="Gene3D" id="3.40.50.880">
    <property type="match status" value="1"/>
</dbReference>
<dbReference type="InterPro" id="IPR006286">
    <property type="entry name" value="C56_PfpI-like"/>
</dbReference>
<dbReference type="InterPro" id="IPR029062">
    <property type="entry name" value="Class_I_gatase-like"/>
</dbReference>
<dbReference type="InterPro" id="IPR002818">
    <property type="entry name" value="DJ-1/PfpI"/>
</dbReference>
<dbReference type="InterPro" id="IPR050325">
    <property type="entry name" value="Prot/Nucl_acid_deglycase"/>
</dbReference>
<dbReference type="NCBIfam" id="TIGR01382">
    <property type="entry name" value="PfpI"/>
    <property type="match status" value="1"/>
</dbReference>
<dbReference type="PANTHER" id="PTHR48094:SF12">
    <property type="entry name" value="PARKINSON DISEASE PROTEIN 7 HOMOLOG"/>
    <property type="match status" value="1"/>
</dbReference>
<dbReference type="PANTHER" id="PTHR48094">
    <property type="entry name" value="PROTEIN/NUCLEIC ACID DEGLYCASE DJ-1-RELATED"/>
    <property type="match status" value="1"/>
</dbReference>
<dbReference type="Pfam" id="PF01965">
    <property type="entry name" value="DJ-1_PfpI"/>
    <property type="match status" value="1"/>
</dbReference>
<dbReference type="SUPFAM" id="SSF52317">
    <property type="entry name" value="Class I glutamine amidotransferase-like"/>
    <property type="match status" value="1"/>
</dbReference>